<dbReference type="EMBL" id="CP000308">
    <property type="protein sequence ID" value="ABG14186.1"/>
    <property type="molecule type" value="Genomic_DNA"/>
</dbReference>
<dbReference type="RefSeq" id="WP_002208527.1">
    <property type="nucleotide sequence ID" value="NZ_CP009906.1"/>
</dbReference>
<dbReference type="KEGG" id="ypa:YPA_2221"/>
<dbReference type="Proteomes" id="UP000001971">
    <property type="component" value="Chromosome"/>
</dbReference>
<dbReference type="CDD" id="cd18720">
    <property type="entry name" value="PIN_YqxD-like"/>
    <property type="match status" value="1"/>
</dbReference>
<dbReference type="HAMAP" id="MF_00489">
    <property type="entry name" value="UPF0178"/>
    <property type="match status" value="1"/>
</dbReference>
<dbReference type="InterPro" id="IPR003791">
    <property type="entry name" value="UPF0178"/>
</dbReference>
<dbReference type="NCBIfam" id="NF001095">
    <property type="entry name" value="PRK00124.1"/>
    <property type="match status" value="1"/>
</dbReference>
<dbReference type="PANTHER" id="PTHR35146">
    <property type="entry name" value="UPF0178 PROTEIN YAII"/>
    <property type="match status" value="1"/>
</dbReference>
<dbReference type="PANTHER" id="PTHR35146:SF1">
    <property type="entry name" value="UPF0178 PROTEIN YAII"/>
    <property type="match status" value="1"/>
</dbReference>
<dbReference type="Pfam" id="PF02639">
    <property type="entry name" value="DUF188"/>
    <property type="match status" value="1"/>
</dbReference>
<proteinExistence type="inferred from homology"/>
<comment type="similarity">
    <text evidence="1">Belongs to the UPF0178 family.</text>
</comment>
<sequence>MQIWVDADACPNVIKEVLFRAADRTGMMVTLVANQPLKTPPSKFIRTVQVASGFDVADNEIVQRVEKNDLVITADIPLAAEVIEKGGIALNPRGERYTPDTIRERLNMRDFMDTMRASGIQTGGPNTLNQRDRQQFANELDKWLQQARNQAK</sequence>
<protein>
    <recommendedName>
        <fullName evidence="1">UPF0178 protein YPA_2221</fullName>
    </recommendedName>
</protein>
<reference key="1">
    <citation type="journal article" date="2006" name="J. Bacteriol.">
        <title>Complete genome sequence of Yersinia pestis strains Antiqua and Nepal516: evidence of gene reduction in an emerging pathogen.</title>
        <authorList>
            <person name="Chain P.S.G."/>
            <person name="Hu P."/>
            <person name="Malfatti S.A."/>
            <person name="Radnedge L."/>
            <person name="Larimer F."/>
            <person name="Vergez L.M."/>
            <person name="Worsham P."/>
            <person name="Chu M.C."/>
            <person name="Andersen G.L."/>
        </authorList>
    </citation>
    <scope>NUCLEOTIDE SEQUENCE [LARGE SCALE GENOMIC DNA]</scope>
    <source>
        <strain>Antiqua</strain>
    </source>
</reference>
<accession>Q1C5T6</accession>
<gene>
    <name type="ordered locus">YPA_2221</name>
</gene>
<organism>
    <name type="scientific">Yersinia pestis bv. Antiqua (strain Antiqua)</name>
    <dbReference type="NCBI Taxonomy" id="360102"/>
    <lineage>
        <taxon>Bacteria</taxon>
        <taxon>Pseudomonadati</taxon>
        <taxon>Pseudomonadota</taxon>
        <taxon>Gammaproteobacteria</taxon>
        <taxon>Enterobacterales</taxon>
        <taxon>Yersiniaceae</taxon>
        <taxon>Yersinia</taxon>
    </lineage>
</organism>
<name>Y2221_YERPA</name>
<feature type="chain" id="PRO_1000014456" description="UPF0178 protein YPA_2221">
    <location>
        <begin position="1"/>
        <end position="152"/>
    </location>
</feature>
<evidence type="ECO:0000255" key="1">
    <source>
        <dbReference type="HAMAP-Rule" id="MF_00489"/>
    </source>
</evidence>